<evidence type="ECO:0000250" key="1">
    <source>
        <dbReference type="UniProtKB" id="Q9BQ90"/>
    </source>
</evidence>
<evidence type="ECO:0000269" key="2">
    <source>
    </source>
</evidence>
<evidence type="ECO:0000269" key="3">
    <source>
    </source>
</evidence>
<evidence type="ECO:0000269" key="4">
    <source ref="3"/>
</evidence>
<evidence type="ECO:0000303" key="5">
    <source>
    </source>
</evidence>
<evidence type="ECO:0000303" key="6">
    <source>
    </source>
</evidence>
<evidence type="ECO:0000305" key="7"/>
<evidence type="ECO:0000312" key="8">
    <source>
        <dbReference type="MGI" id="MGI:2651568"/>
    </source>
</evidence>
<dbReference type="EMBL" id="AB074009">
    <property type="protein sequence ID" value="BAB91441.1"/>
    <property type="molecule type" value="Genomic_DNA"/>
</dbReference>
<dbReference type="EMBL" id="AB053465">
    <property type="protein sequence ID" value="BAB62016.1"/>
    <property type="molecule type" value="mRNA"/>
</dbReference>
<dbReference type="EMBL" id="AJ278127">
    <property type="protein sequence ID" value="CAC34582.1"/>
    <property type="molecule type" value="mRNA"/>
</dbReference>
<dbReference type="EMBL" id="AK004964">
    <property type="protein sequence ID" value="BAB23704.1"/>
    <property type="molecule type" value="mRNA"/>
</dbReference>
<dbReference type="EMBL" id="AK141673">
    <property type="protein sequence ID" value="BAE24793.1"/>
    <property type="molecule type" value="mRNA"/>
</dbReference>
<dbReference type="EMBL" id="AK170623">
    <property type="protein sequence ID" value="BAE41917.1"/>
    <property type="molecule type" value="mRNA"/>
</dbReference>
<dbReference type="EMBL" id="BC018154">
    <property type="protein sequence ID" value="AAH18154.1"/>
    <property type="molecule type" value="mRNA"/>
</dbReference>
<dbReference type="CCDS" id="CCDS28834.1"/>
<dbReference type="RefSeq" id="NP_001157201.2">
    <property type="nucleotide sequence ID" value="NM_001163729.2"/>
</dbReference>
<dbReference type="RefSeq" id="NP_082186.2">
    <property type="nucleotide sequence ID" value="NM_027910.3"/>
</dbReference>
<dbReference type="RefSeq" id="XP_006525006.1">
    <property type="nucleotide sequence ID" value="XM_006524943.3"/>
</dbReference>
<dbReference type="SMR" id="Q8VEM9"/>
<dbReference type="BioGRID" id="214909">
    <property type="interactions" value="1"/>
</dbReference>
<dbReference type="FunCoup" id="Q8VEM9">
    <property type="interactions" value="1495"/>
</dbReference>
<dbReference type="STRING" id="10090.ENSMUSP00000071743"/>
<dbReference type="GlyGen" id="Q8VEM9">
    <property type="glycosylation" value="1 site, 1 N-linked glycan (1 site)"/>
</dbReference>
<dbReference type="PhosphoSitePlus" id="Q8VEM9"/>
<dbReference type="PaxDb" id="10090-ENSMUSP00000071743"/>
<dbReference type="PeptideAtlas" id="Q8VEM9"/>
<dbReference type="ProteomicsDB" id="264947"/>
<dbReference type="DNASU" id="71765"/>
<dbReference type="GeneID" id="71765"/>
<dbReference type="KEGG" id="mmu:71765"/>
<dbReference type="UCSC" id="uc008ctw.2">
    <property type="organism name" value="mouse"/>
</dbReference>
<dbReference type="AGR" id="MGI:2651568"/>
<dbReference type="CTD" id="116138"/>
<dbReference type="MGI" id="MGI:2651568">
    <property type="gene designation" value="Klhdc3"/>
</dbReference>
<dbReference type="eggNOG" id="KOG4693">
    <property type="taxonomic scope" value="Eukaryota"/>
</dbReference>
<dbReference type="InParanoid" id="Q8VEM9"/>
<dbReference type="OrthoDB" id="432528at2759"/>
<dbReference type="PhylomeDB" id="Q8VEM9"/>
<dbReference type="TreeFam" id="TF354289"/>
<dbReference type="UniPathway" id="UPA00143"/>
<dbReference type="BioGRID-ORCS" id="71765">
    <property type="hits" value="2 hits in 78 CRISPR screens"/>
</dbReference>
<dbReference type="ChiTaRS" id="Klhdc3">
    <property type="organism name" value="mouse"/>
</dbReference>
<dbReference type="PRO" id="PR:Q8VEM9"/>
<dbReference type="Proteomes" id="UP000000589">
    <property type="component" value="Unplaced"/>
</dbReference>
<dbReference type="RNAct" id="Q8VEM9">
    <property type="molecule type" value="protein"/>
</dbReference>
<dbReference type="GO" id="GO:0000785">
    <property type="term" value="C:chromatin"/>
    <property type="evidence" value="ECO:0000314"/>
    <property type="project" value="MGI"/>
</dbReference>
<dbReference type="GO" id="GO:0031462">
    <property type="term" value="C:Cul2-RING ubiquitin ligase complex"/>
    <property type="evidence" value="ECO:0000250"/>
    <property type="project" value="UniProtKB"/>
</dbReference>
<dbReference type="GO" id="GO:0005737">
    <property type="term" value="C:cytoplasm"/>
    <property type="evidence" value="ECO:0000314"/>
    <property type="project" value="MGI"/>
</dbReference>
<dbReference type="GO" id="GO:0003682">
    <property type="term" value="F:chromatin binding"/>
    <property type="evidence" value="ECO:0000250"/>
    <property type="project" value="UniProtKB"/>
</dbReference>
<dbReference type="GO" id="GO:1990756">
    <property type="term" value="F:ubiquitin-like ligase-substrate adaptor activity"/>
    <property type="evidence" value="ECO:0000250"/>
    <property type="project" value="UniProtKB"/>
</dbReference>
<dbReference type="GO" id="GO:0051321">
    <property type="term" value="P:meiotic cell cycle"/>
    <property type="evidence" value="ECO:0007669"/>
    <property type="project" value="UniProtKB-KW"/>
</dbReference>
<dbReference type="GO" id="GO:0043161">
    <property type="term" value="P:proteasome-mediated ubiquitin-dependent protein catabolic process"/>
    <property type="evidence" value="ECO:0000250"/>
    <property type="project" value="UniProtKB"/>
</dbReference>
<dbReference type="GO" id="GO:0016567">
    <property type="term" value="P:protein ubiquitination"/>
    <property type="evidence" value="ECO:0007669"/>
    <property type="project" value="UniProtKB-UniPathway"/>
</dbReference>
<dbReference type="FunFam" id="2.120.10.80:FF:000074">
    <property type="entry name" value="Kelch domain containing 3"/>
    <property type="match status" value="1"/>
</dbReference>
<dbReference type="FunFam" id="2.120.10.80:FF:000136">
    <property type="entry name" value="Kelch domain containing 3"/>
    <property type="match status" value="1"/>
</dbReference>
<dbReference type="Gene3D" id="2.120.10.80">
    <property type="entry name" value="Kelch-type beta propeller"/>
    <property type="match status" value="2"/>
</dbReference>
<dbReference type="InterPro" id="IPR015915">
    <property type="entry name" value="Kelch-typ_b-propeller"/>
</dbReference>
<dbReference type="InterPro" id="IPR052637">
    <property type="entry name" value="KLHDC3-like"/>
</dbReference>
<dbReference type="PANTHER" id="PTHR46461">
    <property type="entry name" value="KELCH DOMAIN-CONTAINING PROTEIN 3"/>
    <property type="match status" value="1"/>
</dbReference>
<dbReference type="PANTHER" id="PTHR46461:SF1">
    <property type="entry name" value="KELCH DOMAIN-CONTAINING PROTEIN 3"/>
    <property type="match status" value="1"/>
</dbReference>
<dbReference type="Pfam" id="PF13964">
    <property type="entry name" value="Kelch_6"/>
    <property type="match status" value="1"/>
</dbReference>
<dbReference type="Pfam" id="PF24681">
    <property type="entry name" value="Kelch_KLHDC2_KLHL20_DRC7"/>
    <property type="match status" value="1"/>
</dbReference>
<dbReference type="SUPFAM" id="SSF117281">
    <property type="entry name" value="Kelch motif"/>
    <property type="match status" value="2"/>
</dbReference>
<comment type="function">
    <text evidence="1 2">Substrate-recognition component of a Cul2-RING (CRL2) E3 ubiquitin-protein ligase complex of the DesCEND (destruction via C-end degrons) pathway, which recognizes a C-degron located at the extreme C terminus of target proteins, leading to their ubiquitination and degradation. The C-degron recognized by the DesCEND pathway is usually a motif of less than ten residues and can be present in full-length proteins, truncated proteins or proteolytically cleaved forms. The CRL2(KLHDC3) complex specifically recognizes proteins with a glycine (Gly) at the C-terminus, leading to their ubiquitination and degradation: recognizes the C-terminal -Arg-(Xaa)n-Arg-Gly, -Arg-(Xaa)n-Lys-Gly, and -Arg-(Xaa)n-Gln-Gly degrons. The CRL2(KLHDC3) complex mediates ubiquitination and degradation of truncated SELENOV and SEPHS2 selenoproteins produced by failed UGA/Sec decoding, which end with a glycine (By similarity). May be involved in meiotic recombination process (PubMed:12606021).</text>
</comment>
<comment type="pathway">
    <text evidence="1">Protein modification; protein ubiquitination.</text>
</comment>
<comment type="subunit">
    <text evidence="1">Component of a CRL2(KLHDC3) complex, also named ECS(KLHDC3) complex, composed of CUL2, Elongin BC (ELOB and ELOC), RBX1 and substrate-specific adapter KLHDC3 (By similarity). May form oligomers as a KLHDC3-ELOB-ELOC complex; this interaction is likely autoinhibitory for the E3 ligase complex (By similarity).</text>
</comment>
<comment type="subcellular location">
    <subcellularLocation>
        <location evidence="2">Cytoplasm</location>
    </subcellularLocation>
    <text evidence="2">Also found in meiotic chromatin.</text>
</comment>
<comment type="tissue specificity">
    <text evidence="2">Expressed specifically in testis, particularly in pachytene spermatocytes.</text>
</comment>
<name>KLDC3_MOUSE</name>
<organism>
    <name type="scientific">Mus musculus</name>
    <name type="common">Mouse</name>
    <dbReference type="NCBI Taxonomy" id="10090"/>
    <lineage>
        <taxon>Eukaryota</taxon>
        <taxon>Metazoa</taxon>
        <taxon>Chordata</taxon>
        <taxon>Craniata</taxon>
        <taxon>Vertebrata</taxon>
        <taxon>Euteleostomi</taxon>
        <taxon>Mammalia</taxon>
        <taxon>Eutheria</taxon>
        <taxon>Euarchontoglires</taxon>
        <taxon>Glires</taxon>
        <taxon>Rodentia</taxon>
        <taxon>Myomorpha</taxon>
        <taxon>Muroidea</taxon>
        <taxon>Muridae</taxon>
        <taxon>Murinae</taxon>
        <taxon>Mus</taxon>
        <taxon>Mus</taxon>
    </lineage>
</organism>
<reference key="1">
    <citation type="journal article" date="2002" name="Biol. Reprod.">
        <title>Male-enhanced antigen-1 gene flanked by two overlapping genes is expressed in late spermatogenesis.</title>
        <authorList>
            <person name="Ohinata Y."/>
            <person name="Sutou S."/>
            <person name="Kondo M."/>
            <person name="Takahashi T."/>
            <person name="Mitsui Y."/>
        </authorList>
    </citation>
    <scope>NUCLEOTIDE SEQUENCE [GENOMIC DNA]</scope>
    <source>
        <strain>129/SvJ</strain>
    </source>
</reference>
<reference key="2">
    <citation type="journal article" date="2003" name="FEBS Lett.">
        <title>A novel testis-specific RAG2-like protein, Peas: its expression in pachytene spermatocyte cytoplasm and meiotic chromatin.</title>
        <authorList>
            <person name="Ohinata Y."/>
            <person name="Sutou S."/>
            <person name="Mitsui Y."/>
        </authorList>
    </citation>
    <scope>NUCLEOTIDE SEQUENCE [MRNA]</scope>
    <scope>VARIANT ALA-123</scope>
    <scope>SUBCELLULAR LOCATION</scope>
    <scope>TISSUE SPECIFICITY</scope>
    <source>
        <strain>BALB/cJ</strain>
        <tissue>Testis</tissue>
    </source>
</reference>
<reference key="3">
    <citation type="submission" date="2000-05" db="EMBL/GenBank/DDBJ databases">
        <title>Full length sequencing of some human and murine muscular transcripts (Telethon Italy project B41).</title>
        <authorList>
            <person name="Ievolella C."/>
            <person name="Zara I."/>
            <person name="Millino C."/>
            <person name="Faulkner G."/>
            <person name="Lanfranchi G."/>
        </authorList>
    </citation>
    <scope>NUCLEOTIDE SEQUENCE [LARGE SCALE MRNA]</scope>
    <scope>VARIANT ALA-123</scope>
</reference>
<reference key="4">
    <citation type="journal article" date="2005" name="Science">
        <title>The transcriptional landscape of the mammalian genome.</title>
        <authorList>
            <person name="Carninci P."/>
            <person name="Kasukawa T."/>
            <person name="Katayama S."/>
            <person name="Gough J."/>
            <person name="Frith M.C."/>
            <person name="Maeda N."/>
            <person name="Oyama R."/>
            <person name="Ravasi T."/>
            <person name="Lenhard B."/>
            <person name="Wells C."/>
            <person name="Kodzius R."/>
            <person name="Shimokawa K."/>
            <person name="Bajic V.B."/>
            <person name="Brenner S.E."/>
            <person name="Batalov S."/>
            <person name="Forrest A.R."/>
            <person name="Zavolan M."/>
            <person name="Davis M.J."/>
            <person name="Wilming L.G."/>
            <person name="Aidinis V."/>
            <person name="Allen J.E."/>
            <person name="Ambesi-Impiombato A."/>
            <person name="Apweiler R."/>
            <person name="Aturaliya R.N."/>
            <person name="Bailey T.L."/>
            <person name="Bansal M."/>
            <person name="Baxter L."/>
            <person name="Beisel K.W."/>
            <person name="Bersano T."/>
            <person name="Bono H."/>
            <person name="Chalk A.M."/>
            <person name="Chiu K.P."/>
            <person name="Choudhary V."/>
            <person name="Christoffels A."/>
            <person name="Clutterbuck D.R."/>
            <person name="Crowe M.L."/>
            <person name="Dalla E."/>
            <person name="Dalrymple B.P."/>
            <person name="de Bono B."/>
            <person name="Della Gatta G."/>
            <person name="di Bernardo D."/>
            <person name="Down T."/>
            <person name="Engstrom P."/>
            <person name="Fagiolini M."/>
            <person name="Faulkner G."/>
            <person name="Fletcher C.F."/>
            <person name="Fukushima T."/>
            <person name="Furuno M."/>
            <person name="Futaki S."/>
            <person name="Gariboldi M."/>
            <person name="Georgii-Hemming P."/>
            <person name="Gingeras T.R."/>
            <person name="Gojobori T."/>
            <person name="Green R.E."/>
            <person name="Gustincich S."/>
            <person name="Harbers M."/>
            <person name="Hayashi Y."/>
            <person name="Hensch T.K."/>
            <person name="Hirokawa N."/>
            <person name="Hill D."/>
            <person name="Huminiecki L."/>
            <person name="Iacono M."/>
            <person name="Ikeo K."/>
            <person name="Iwama A."/>
            <person name="Ishikawa T."/>
            <person name="Jakt M."/>
            <person name="Kanapin A."/>
            <person name="Katoh M."/>
            <person name="Kawasawa Y."/>
            <person name="Kelso J."/>
            <person name="Kitamura H."/>
            <person name="Kitano H."/>
            <person name="Kollias G."/>
            <person name="Krishnan S.P."/>
            <person name="Kruger A."/>
            <person name="Kummerfeld S.K."/>
            <person name="Kurochkin I.V."/>
            <person name="Lareau L.F."/>
            <person name="Lazarevic D."/>
            <person name="Lipovich L."/>
            <person name="Liu J."/>
            <person name="Liuni S."/>
            <person name="McWilliam S."/>
            <person name="Madan Babu M."/>
            <person name="Madera M."/>
            <person name="Marchionni L."/>
            <person name="Matsuda H."/>
            <person name="Matsuzawa S."/>
            <person name="Miki H."/>
            <person name="Mignone F."/>
            <person name="Miyake S."/>
            <person name="Morris K."/>
            <person name="Mottagui-Tabar S."/>
            <person name="Mulder N."/>
            <person name="Nakano N."/>
            <person name="Nakauchi H."/>
            <person name="Ng P."/>
            <person name="Nilsson R."/>
            <person name="Nishiguchi S."/>
            <person name="Nishikawa S."/>
            <person name="Nori F."/>
            <person name="Ohara O."/>
            <person name="Okazaki Y."/>
            <person name="Orlando V."/>
            <person name="Pang K.C."/>
            <person name="Pavan W.J."/>
            <person name="Pavesi G."/>
            <person name="Pesole G."/>
            <person name="Petrovsky N."/>
            <person name="Piazza S."/>
            <person name="Reed J."/>
            <person name="Reid J.F."/>
            <person name="Ring B.Z."/>
            <person name="Ringwald M."/>
            <person name="Rost B."/>
            <person name="Ruan Y."/>
            <person name="Salzberg S.L."/>
            <person name="Sandelin A."/>
            <person name="Schneider C."/>
            <person name="Schoenbach C."/>
            <person name="Sekiguchi K."/>
            <person name="Semple C.A."/>
            <person name="Seno S."/>
            <person name="Sessa L."/>
            <person name="Sheng Y."/>
            <person name="Shibata Y."/>
            <person name="Shimada H."/>
            <person name="Shimada K."/>
            <person name="Silva D."/>
            <person name="Sinclair B."/>
            <person name="Sperling S."/>
            <person name="Stupka E."/>
            <person name="Sugiura K."/>
            <person name="Sultana R."/>
            <person name="Takenaka Y."/>
            <person name="Taki K."/>
            <person name="Tammoja K."/>
            <person name="Tan S.L."/>
            <person name="Tang S."/>
            <person name="Taylor M.S."/>
            <person name="Tegner J."/>
            <person name="Teichmann S.A."/>
            <person name="Ueda H.R."/>
            <person name="van Nimwegen E."/>
            <person name="Verardo R."/>
            <person name="Wei C.L."/>
            <person name="Yagi K."/>
            <person name="Yamanishi H."/>
            <person name="Zabarovsky E."/>
            <person name="Zhu S."/>
            <person name="Zimmer A."/>
            <person name="Hide W."/>
            <person name="Bult C."/>
            <person name="Grimmond S.M."/>
            <person name="Teasdale R.D."/>
            <person name="Liu E.T."/>
            <person name="Brusic V."/>
            <person name="Quackenbush J."/>
            <person name="Wahlestedt C."/>
            <person name="Mattick J.S."/>
            <person name="Hume D.A."/>
            <person name="Kai C."/>
            <person name="Sasaki D."/>
            <person name="Tomaru Y."/>
            <person name="Fukuda S."/>
            <person name="Kanamori-Katayama M."/>
            <person name="Suzuki M."/>
            <person name="Aoki J."/>
            <person name="Arakawa T."/>
            <person name="Iida J."/>
            <person name="Imamura K."/>
            <person name="Itoh M."/>
            <person name="Kato T."/>
            <person name="Kawaji H."/>
            <person name="Kawagashira N."/>
            <person name="Kawashima T."/>
            <person name="Kojima M."/>
            <person name="Kondo S."/>
            <person name="Konno H."/>
            <person name="Nakano K."/>
            <person name="Ninomiya N."/>
            <person name="Nishio T."/>
            <person name="Okada M."/>
            <person name="Plessy C."/>
            <person name="Shibata K."/>
            <person name="Shiraki T."/>
            <person name="Suzuki S."/>
            <person name="Tagami M."/>
            <person name="Waki K."/>
            <person name="Watahiki A."/>
            <person name="Okamura-Oho Y."/>
            <person name="Suzuki H."/>
            <person name="Kawai J."/>
            <person name="Hayashizaki Y."/>
        </authorList>
    </citation>
    <scope>NUCLEOTIDE SEQUENCE [LARGE SCALE MRNA]</scope>
    <scope>VARIANT ALA-123</scope>
    <source>
        <strain>C57BL/6J</strain>
        <strain>NOD</strain>
        <tissue>Liver</tissue>
    </source>
</reference>
<reference key="5">
    <citation type="journal article" date="2004" name="Genome Res.">
        <title>The status, quality, and expansion of the NIH full-length cDNA project: the Mammalian Gene Collection (MGC).</title>
        <authorList>
            <consortium name="The MGC Project Team"/>
        </authorList>
    </citation>
    <scope>NUCLEOTIDE SEQUENCE [LARGE SCALE MRNA]</scope>
    <source>
        <strain>Czech II</strain>
        <tissue>Mammary tumor</tissue>
    </source>
</reference>
<accession>Q8VEM9</accession>
<accession>Q3TCN9</accession>
<accession>Q3UR95</accession>
<accession>Q91XU6</accession>
<accession>Q99JH9</accession>
<accession>Q9DBG8</accession>
<gene>
    <name evidence="8" type="primary">Klhdc3</name>
    <name evidence="5 6" type="synonym">Peas</name>
</gene>
<keyword id="KW-0963">Cytoplasm</keyword>
<keyword id="KW-0880">Kelch repeat</keyword>
<keyword id="KW-0469">Meiosis</keyword>
<keyword id="KW-1185">Reference proteome</keyword>
<keyword id="KW-0677">Repeat</keyword>
<keyword id="KW-0833">Ubl conjugation pathway</keyword>
<feature type="chain" id="PRO_0000228996" description="Kelch domain-containing protein 3">
    <location>
        <begin position="1"/>
        <end position="382"/>
    </location>
</feature>
<feature type="repeat" description="Kelch 1">
    <location>
        <begin position="25"/>
        <end position="77"/>
    </location>
</feature>
<feature type="repeat" description="Kelch 2">
    <location>
        <begin position="88"/>
        <end position="138"/>
    </location>
</feature>
<feature type="repeat" description="Kelch 3">
    <location>
        <begin position="139"/>
        <end position="189"/>
    </location>
</feature>
<feature type="repeat" description="Kelch 4">
    <location>
        <begin position="191"/>
        <end position="249"/>
    </location>
</feature>
<feature type="repeat" description="Kelch 5">
    <location>
        <begin position="251"/>
        <end position="301"/>
    </location>
</feature>
<feature type="sequence variant" evidence="2 3 4">
    <original>T</original>
    <variation>A</variation>
    <location>
        <position position="123"/>
    </location>
</feature>
<feature type="sequence conflict" description="In Ref. 4; BAE41917." evidence="7" ref="4">
    <original>L</original>
    <variation>I</variation>
    <location>
        <position position="2"/>
    </location>
</feature>
<feature type="sequence conflict" description="In Ref. 2; BAB62016." evidence="7" ref="2">
    <original>A</original>
    <variation>T</variation>
    <location>
        <position position="19"/>
    </location>
</feature>
<feature type="sequence conflict" description="In Ref. 4; BAB23704." evidence="7" ref="4">
    <original>T</original>
    <variation>A</variation>
    <location>
        <position position="168"/>
    </location>
</feature>
<feature type="sequence conflict" description="In Ref. 4; BAE24793." evidence="7" ref="4">
    <original>R</original>
    <variation>H</variation>
    <location>
        <position position="201"/>
    </location>
</feature>
<proteinExistence type="evidence at transcript level"/>
<sequence>MLRWTVHLEGGPRRVNHAAVAVGHRVYSFGGYCSGEDYETLRQIDVHIFNAVSLRWTKLPPVRPAVRGQAPVVPYMRYGHSTVLIDDTVFLWGGRNDTEGACNVLYAFDVNTHKWSTPRVSGTVPGARDGHSACVLGKIMYIFGGYEQLADCFSNDIHKLDTSTMTWTLVCTKGNPARWRDFHSATMLGNHMYVFGGRADRFGPFHSNNEIYCNRIRVFDTRTEAWLDCPHTPVLPEGRRSHSAFGYNGELYIFGGYNARLNRHFHDLWKFNPGSFTWKKIEPKGKGPCPRRRQCCCIVGDKIVLFGGTSPSPEEGLGDEFDLIDHSDLHILDFSPSLKTLCKLAVIQYSLDQSCLPHDIRWELNAMTTNSNISRPIVSSHG</sequence>
<protein>
    <recommendedName>
        <fullName evidence="7">Kelch domain-containing protein 3</fullName>
    </recommendedName>
    <alternativeName>
        <fullName evidence="6">Testis intracellular mediator protein</fullName>
    </alternativeName>
</protein>